<reference key="1">
    <citation type="journal article" date="2004" name="Nature">
        <title>Genome evolution in yeasts.</title>
        <authorList>
            <person name="Dujon B."/>
            <person name="Sherman D."/>
            <person name="Fischer G."/>
            <person name="Durrens P."/>
            <person name="Casaregola S."/>
            <person name="Lafontaine I."/>
            <person name="de Montigny J."/>
            <person name="Marck C."/>
            <person name="Neuveglise C."/>
            <person name="Talla E."/>
            <person name="Goffard N."/>
            <person name="Frangeul L."/>
            <person name="Aigle M."/>
            <person name="Anthouard V."/>
            <person name="Babour A."/>
            <person name="Barbe V."/>
            <person name="Barnay S."/>
            <person name="Blanchin S."/>
            <person name="Beckerich J.-M."/>
            <person name="Beyne E."/>
            <person name="Bleykasten C."/>
            <person name="Boisrame A."/>
            <person name="Boyer J."/>
            <person name="Cattolico L."/>
            <person name="Confanioleri F."/>
            <person name="de Daruvar A."/>
            <person name="Despons L."/>
            <person name="Fabre E."/>
            <person name="Fairhead C."/>
            <person name="Ferry-Dumazet H."/>
            <person name="Groppi A."/>
            <person name="Hantraye F."/>
            <person name="Hennequin C."/>
            <person name="Jauniaux N."/>
            <person name="Joyet P."/>
            <person name="Kachouri R."/>
            <person name="Kerrest A."/>
            <person name="Koszul R."/>
            <person name="Lemaire M."/>
            <person name="Lesur I."/>
            <person name="Ma L."/>
            <person name="Muller H."/>
            <person name="Nicaud J.-M."/>
            <person name="Nikolski M."/>
            <person name="Oztas S."/>
            <person name="Ozier-Kalogeropoulos O."/>
            <person name="Pellenz S."/>
            <person name="Potier S."/>
            <person name="Richard G.-F."/>
            <person name="Straub M.-L."/>
            <person name="Suleau A."/>
            <person name="Swennen D."/>
            <person name="Tekaia F."/>
            <person name="Wesolowski-Louvel M."/>
            <person name="Westhof E."/>
            <person name="Wirth B."/>
            <person name="Zeniou-Meyer M."/>
            <person name="Zivanovic Y."/>
            <person name="Bolotin-Fukuhara M."/>
            <person name="Thierry A."/>
            <person name="Bouchier C."/>
            <person name="Caudron B."/>
            <person name="Scarpelli C."/>
            <person name="Gaillardin C."/>
            <person name="Weissenbach J."/>
            <person name="Wincker P."/>
            <person name="Souciet J.-L."/>
        </authorList>
    </citation>
    <scope>NUCLEOTIDE SEQUENCE [LARGE SCALE GENOMIC DNA]</scope>
    <source>
        <strain>ATCC 8585 / CBS 2359 / DSM 70799 / NBRC 1267 / NRRL Y-1140 / WM37</strain>
    </source>
</reference>
<name>BLI1_KLULA</name>
<proteinExistence type="inferred from homology"/>
<evidence type="ECO:0000250" key="1"/>
<evidence type="ECO:0000255" key="2"/>
<evidence type="ECO:0000305" key="3"/>
<keyword id="KW-0175">Coiled coil</keyword>
<keyword id="KW-0967">Endosome</keyword>
<keyword id="KW-1185">Reference proteome</keyword>
<keyword id="KW-0813">Transport</keyword>
<dbReference type="EMBL" id="CR382125">
    <property type="protein sequence ID" value="CAG99382.1"/>
    <property type="molecule type" value="Genomic_DNA"/>
</dbReference>
<dbReference type="RefSeq" id="XP_454295.1">
    <property type="nucleotide sequence ID" value="XM_454295.1"/>
</dbReference>
<dbReference type="SMR" id="Q6CP44"/>
<dbReference type="PaxDb" id="284590-Q6CP44"/>
<dbReference type="KEGG" id="kla:KLLA0_E07679g"/>
<dbReference type="HOGENOM" id="CLU_2250553_0_0_1"/>
<dbReference type="InParanoid" id="Q6CP44"/>
<dbReference type="Proteomes" id="UP000000598">
    <property type="component" value="Chromosome E"/>
</dbReference>
<dbReference type="GO" id="GO:0005768">
    <property type="term" value="C:endosome"/>
    <property type="evidence" value="ECO:0007669"/>
    <property type="project" value="UniProtKB-SubCell"/>
</dbReference>
<dbReference type="InterPro" id="IPR020491">
    <property type="entry name" value="BLI1"/>
</dbReference>
<dbReference type="Pfam" id="PF17324">
    <property type="entry name" value="BLI1"/>
    <property type="match status" value="1"/>
</dbReference>
<comment type="function">
    <text evidence="1">Component of the biogenesis of lysosome-related organelles complex-1 (BLOC-1) involved in endosomal cargo sorting.</text>
</comment>
<comment type="subunit">
    <text evidence="1">Component of the biogenesis of lysosome-related organelles complex-1 (BLOC-1).</text>
</comment>
<comment type="subcellular location">
    <subcellularLocation>
        <location evidence="1">Endosome</location>
    </subcellularLocation>
</comment>
<comment type="similarity">
    <text evidence="3">Belongs to the BLI1 family.</text>
</comment>
<organism>
    <name type="scientific">Kluyveromyces lactis (strain ATCC 8585 / CBS 2359 / DSM 70799 / NBRC 1267 / NRRL Y-1140 / WM37)</name>
    <name type="common">Yeast</name>
    <name type="synonym">Candida sphaerica</name>
    <dbReference type="NCBI Taxonomy" id="284590"/>
    <lineage>
        <taxon>Eukaryota</taxon>
        <taxon>Fungi</taxon>
        <taxon>Dikarya</taxon>
        <taxon>Ascomycota</taxon>
        <taxon>Saccharomycotina</taxon>
        <taxon>Saccharomycetes</taxon>
        <taxon>Saccharomycetales</taxon>
        <taxon>Saccharomycetaceae</taxon>
        <taxon>Kluyveromyces</taxon>
    </lineage>
</organism>
<accession>Q6CP44</accession>
<feature type="chain" id="PRO_0000410614" description="Biogenesis of lysosome-related organelles complex 1 subunit BLI1">
    <location>
        <begin position="1"/>
        <end position="104"/>
    </location>
</feature>
<feature type="coiled-coil region" evidence="2">
    <location>
        <begin position="56"/>
        <end position="99"/>
    </location>
</feature>
<gene>
    <name type="primary">BLI1</name>
    <name type="ordered locus">KLLA0E07679g</name>
</gene>
<protein>
    <recommendedName>
        <fullName>Biogenesis of lysosome-related organelles complex 1 subunit BLI1</fullName>
        <shortName>BLOC-1 subunit BLI1</shortName>
    </recommendedName>
    <alternativeName>
        <fullName>BLOC-1 interactor 1</fullName>
    </alternativeName>
</protein>
<sequence>MRGKALKSKLEELVDGIQQRIDFVTATGVSSFEQETEQNYGKLEYLQSKIKKDDGISDWVDEKQRLSGRLNKLEKQVQELEELADEWENYLQLLADTKLRKDNV</sequence>